<keyword id="KW-0067">ATP-binding</keyword>
<keyword id="KW-0418">Kinase</keyword>
<keyword id="KW-0547">Nucleotide-binding</keyword>
<keyword id="KW-1185">Reference proteome</keyword>
<keyword id="KW-0723">Serine/threonine-protein kinase</keyword>
<keyword id="KW-0808">Transferase</keyword>
<evidence type="ECO:0000255" key="1">
    <source>
        <dbReference type="PROSITE-ProRule" id="PRU00159"/>
    </source>
</evidence>
<evidence type="ECO:0000255" key="2">
    <source>
        <dbReference type="PROSITE-ProRule" id="PRU10027"/>
    </source>
</evidence>
<evidence type="ECO:0000256" key="3">
    <source>
        <dbReference type="SAM" id="MobiDB-lite"/>
    </source>
</evidence>
<evidence type="ECO:0000269" key="4">
    <source>
    </source>
</evidence>
<evidence type="ECO:0000269" key="5">
    <source>
    </source>
</evidence>
<name>IFKB_DICDI</name>
<sequence>MIGKGGFGVVVKSRNKLDCRYYAIKKIKTKGYTDSNQEPLTNKLLREVTTLSRLHHQFVVRYYQAWIEKSCDSFQSLEEGNEDLSGDLETDASEDWFMQSSINSRSIISRDSYSGLSTSNSNVGGANNTAGGGDSVSNANSNKSMIVGNNNKKLTLSSSNTSSSSSLLSNNKSKILNTSKSTSTNTSTSTSTSNTNKNKKISKKKKSKLSPLMKPKNKKNKNNGESEQSSSDSENGENGMKSRIIENASDSYSDDDNNNNNDSNNNYHSDNESDSFSGSISMSDGNGSGYEATDDEDIINNSGSFDDNENDDDDEEDDDDEYDEEDDDYETFDFQDKSRVVSNNSKLSTSSSRKKPPKETHTLYIQMEYCSKKTLKTLIDNVGGIAEEEAFRLLRQIVEGLNHIHSQQIIHRDLKPANIFIDNEQNVKIGDFGLATSGAPVSKSDDLNSSTSNAANNINLSSSTNSTAQQTPMWDLNDENLSMTGGVGTPFYCCPEILEKNTKHYGTKVDMYSLGIIFFEMCFQFQTQMERSNILRDLRDNLKFPPGFESTKPDQTQIIRSLLSRDPTQRPSTKQLLESGLLPSKMEDDILKEAIKTIANPTISLFSYLMEKLFCLSNDEHIMSRYLYTSNPSLTPMHLICREKTFSRLEKIFLNHGSIRIDTPTLFPKNPTNSTHPGAANVAKFLDESGTVVYLPYDLTIPWARHVVIHNIQQAKRYTFSKVYRRSQPGFSPKELYECDFDIIGPSKSRHISDAETLRIIIEIMEEFKDELFGNNSGSNSGSGSGGSINYKIRINHYGLLDSILSECGVEKRFFTVVYQTVAQLHWRLNWAQVAQSLKEHGLSASIVSNISTYFRQRGELAQCVTQLESLLANHKEATTGISDLKILVRNLQMINIIPRFLLDLSLIHNHQYYEGLVFQAYIERPTLSNPSRTEIIMSGGRYDKLIKSLHPNPSLSNNIVSGVGVTLACEKIVNSVLNYRQHLLNNCFNTTYTRRNKDPPNSNNNPNNNNLNNNVSIFTKFQSHIEVFVCSLGSSLLGEKLQVASQLWSAGIKADYSQTDYYSSEDIYSNCRENGIPWVVILREKAFQIGKLKVKQIETRQERTVARKDLVDFFLKSRKHNVDSKNIIQNTSSSDLSNLIGGINNSGSGGSGGSGGGSSMSSGGGGGGNSNIGGSDHHHHGHHSNQSTSSSGNSNNSNTQQTSPIQHHVHFSNTKSIIGSSGIISNATFSGGSSSSSNIIHFDEPTDSFSTQIVYQGVEEIKKSKIETLVQTSLSKLFRGFIQSKSSTIRVIVTDLAYSVIRDLQISESHDNISKFQRVSKEKLLQLKNQIFKWKVYPFIVIHSIKDDKSVIFNSVV</sequence>
<proteinExistence type="evidence at transcript level"/>
<feature type="chain" id="PRO_0000362012" description="Probable serine/threonine-protein kinase ifkB">
    <location>
        <begin position="1"/>
        <end position="1358"/>
    </location>
</feature>
<feature type="domain" description="Protein kinase" evidence="1">
    <location>
        <begin position="1"/>
        <end position="582"/>
    </location>
</feature>
<feature type="region of interest" description="Disordered" evidence="3">
    <location>
        <begin position="125"/>
        <end position="359"/>
    </location>
</feature>
<feature type="region of interest" description="Disordered" evidence="3">
    <location>
        <begin position="445"/>
        <end position="470"/>
    </location>
</feature>
<feature type="region of interest" description="Disordered" evidence="3">
    <location>
        <begin position="1148"/>
        <end position="1204"/>
    </location>
</feature>
<feature type="compositionally biased region" description="Polar residues" evidence="3">
    <location>
        <begin position="136"/>
        <end position="148"/>
    </location>
</feature>
<feature type="compositionally biased region" description="Low complexity" evidence="3">
    <location>
        <begin position="149"/>
        <end position="196"/>
    </location>
</feature>
<feature type="compositionally biased region" description="Basic residues" evidence="3">
    <location>
        <begin position="197"/>
        <end position="208"/>
    </location>
</feature>
<feature type="compositionally biased region" description="Low complexity" evidence="3">
    <location>
        <begin position="258"/>
        <end position="285"/>
    </location>
</feature>
<feature type="compositionally biased region" description="Acidic residues" evidence="3">
    <location>
        <begin position="306"/>
        <end position="333"/>
    </location>
</feature>
<feature type="compositionally biased region" description="Low complexity" evidence="3">
    <location>
        <begin position="342"/>
        <end position="351"/>
    </location>
</feature>
<feature type="compositionally biased region" description="Low complexity" evidence="3">
    <location>
        <begin position="447"/>
        <end position="466"/>
    </location>
</feature>
<feature type="compositionally biased region" description="Gly residues" evidence="3">
    <location>
        <begin position="1148"/>
        <end position="1172"/>
    </location>
</feature>
<feature type="compositionally biased region" description="Low complexity" evidence="3">
    <location>
        <begin position="1185"/>
        <end position="1199"/>
    </location>
</feature>
<feature type="active site" description="Proton acceptor" evidence="1 2">
    <location>
        <position position="413"/>
    </location>
</feature>
<feature type="binding site" evidence="1">
    <location>
        <begin position="2"/>
        <end position="10"/>
    </location>
    <ligand>
        <name>ATP</name>
        <dbReference type="ChEBI" id="CHEBI:30616"/>
    </ligand>
</feature>
<feature type="binding site" evidence="1">
    <location>
        <position position="25"/>
    </location>
    <ligand>
        <name>ATP</name>
        <dbReference type="ChEBI" id="CHEBI:30616"/>
    </ligand>
</feature>
<organism>
    <name type="scientific">Dictyostelium discoideum</name>
    <name type="common">Social amoeba</name>
    <dbReference type="NCBI Taxonomy" id="44689"/>
    <lineage>
        <taxon>Eukaryota</taxon>
        <taxon>Amoebozoa</taxon>
        <taxon>Evosea</taxon>
        <taxon>Eumycetozoa</taxon>
        <taxon>Dictyostelia</taxon>
        <taxon>Dictyosteliales</taxon>
        <taxon>Dictyosteliaceae</taxon>
        <taxon>Dictyostelium</taxon>
    </lineage>
</organism>
<accession>Q550L8</accession>
<accession>Q7KWM3</accession>
<dbReference type="EC" id="2.7.11.1"/>
<dbReference type="EMBL" id="AAFI02000019">
    <property type="protein sequence ID" value="EAL68916.1"/>
    <property type="molecule type" value="Genomic_DNA"/>
</dbReference>
<dbReference type="RefSeq" id="XP_642914.1">
    <property type="nucleotide sequence ID" value="XM_637822.1"/>
</dbReference>
<dbReference type="SMR" id="Q550L8"/>
<dbReference type="FunCoup" id="Q550L8">
    <property type="interactions" value="590"/>
</dbReference>
<dbReference type="STRING" id="44689.Q550L8"/>
<dbReference type="PaxDb" id="44689-DDB0185219"/>
<dbReference type="EnsemblProtists" id="EAL68916">
    <property type="protein sequence ID" value="EAL68916"/>
    <property type="gene ID" value="DDB_G0276829"/>
</dbReference>
<dbReference type="GeneID" id="8620780"/>
<dbReference type="KEGG" id="ddi:DDB_G0276829"/>
<dbReference type="dictyBase" id="DDB_G0276829">
    <property type="gene designation" value="ifkB"/>
</dbReference>
<dbReference type="VEuPathDB" id="AmoebaDB:DDB_G0276829"/>
<dbReference type="eggNOG" id="KOG1035">
    <property type="taxonomic scope" value="Eukaryota"/>
</dbReference>
<dbReference type="HOGENOM" id="CLU_001222_0_0_1"/>
<dbReference type="InParanoid" id="Q550L8"/>
<dbReference type="OMA" id="WFLRIND"/>
<dbReference type="PhylomeDB" id="Q550L8"/>
<dbReference type="PRO" id="PR:Q550L8"/>
<dbReference type="Proteomes" id="UP000002195">
    <property type="component" value="Chromosome 2"/>
</dbReference>
<dbReference type="GO" id="GO:0005737">
    <property type="term" value="C:cytoplasm"/>
    <property type="evidence" value="ECO:0000318"/>
    <property type="project" value="GO_Central"/>
</dbReference>
<dbReference type="GO" id="GO:0005829">
    <property type="term" value="C:cytosol"/>
    <property type="evidence" value="ECO:0000318"/>
    <property type="project" value="GO_Central"/>
</dbReference>
<dbReference type="GO" id="GO:0005634">
    <property type="term" value="C:nucleus"/>
    <property type="evidence" value="ECO:0000318"/>
    <property type="project" value="GO_Central"/>
</dbReference>
<dbReference type="GO" id="GO:0005524">
    <property type="term" value="F:ATP binding"/>
    <property type="evidence" value="ECO:0000305"/>
    <property type="project" value="dictyBase"/>
</dbReference>
<dbReference type="GO" id="GO:0004694">
    <property type="term" value="F:eukaryotic translation initiation factor 2alpha kinase activity"/>
    <property type="evidence" value="ECO:0000250"/>
    <property type="project" value="dictyBase"/>
</dbReference>
<dbReference type="GO" id="GO:0106310">
    <property type="term" value="F:protein serine kinase activity"/>
    <property type="evidence" value="ECO:0007669"/>
    <property type="project" value="RHEA"/>
</dbReference>
<dbReference type="GO" id="GO:0098609">
    <property type="term" value="P:cell-cell adhesion"/>
    <property type="evidence" value="ECO:0000316"/>
    <property type="project" value="dictyBase"/>
</dbReference>
<dbReference type="GO" id="GO:0031589">
    <property type="term" value="P:cell-substrate adhesion"/>
    <property type="evidence" value="ECO:0000316"/>
    <property type="project" value="dictyBase"/>
</dbReference>
<dbReference type="GO" id="GO:0034198">
    <property type="term" value="P:cellular response to amino acid starvation"/>
    <property type="evidence" value="ECO:0000318"/>
    <property type="project" value="GO_Central"/>
</dbReference>
<dbReference type="GO" id="GO:0000077">
    <property type="term" value="P:DNA damage checkpoint signaling"/>
    <property type="evidence" value="ECO:0007669"/>
    <property type="project" value="InterPro"/>
</dbReference>
<dbReference type="GO" id="GO:0032057">
    <property type="term" value="P:negative regulation of translational initiation in response to stress"/>
    <property type="evidence" value="ECO:0000318"/>
    <property type="project" value="GO_Central"/>
</dbReference>
<dbReference type="GO" id="GO:0006468">
    <property type="term" value="P:protein phosphorylation"/>
    <property type="evidence" value="ECO:0000250"/>
    <property type="project" value="dictyBase"/>
</dbReference>
<dbReference type="FunFam" id="3.40.50.800:FF:000009">
    <property type="entry name" value="Eukaryotic translation initiation factor 2-alpha kinase"/>
    <property type="match status" value="1"/>
</dbReference>
<dbReference type="FunFam" id="3.30.930.10:FF:000074">
    <property type="entry name" value="Serine/threonine-protein kinase gcn2"/>
    <property type="match status" value="1"/>
</dbReference>
<dbReference type="Gene3D" id="3.40.50.800">
    <property type="entry name" value="Anticodon-binding domain"/>
    <property type="match status" value="1"/>
</dbReference>
<dbReference type="Gene3D" id="3.30.930.10">
    <property type="entry name" value="Bira Bifunctional Protein, Domain 2"/>
    <property type="match status" value="1"/>
</dbReference>
<dbReference type="Gene3D" id="3.30.200.20">
    <property type="entry name" value="Phosphorylase Kinase, domain 1"/>
    <property type="match status" value="1"/>
</dbReference>
<dbReference type="Gene3D" id="1.10.510.10">
    <property type="entry name" value="Transferase(Phosphotransferase) domain 1"/>
    <property type="match status" value="1"/>
</dbReference>
<dbReference type="InterPro" id="IPR045864">
    <property type="entry name" value="aa-tRNA-synth_II/BPL/LPL"/>
</dbReference>
<dbReference type="InterPro" id="IPR036621">
    <property type="entry name" value="Anticodon-bd_dom_sf"/>
</dbReference>
<dbReference type="InterPro" id="IPR016255">
    <property type="entry name" value="Gcn2"/>
</dbReference>
<dbReference type="InterPro" id="IPR041715">
    <property type="entry name" value="HisRS-like_core"/>
</dbReference>
<dbReference type="InterPro" id="IPR024435">
    <property type="entry name" value="HisRS-related_dom"/>
</dbReference>
<dbReference type="InterPro" id="IPR011009">
    <property type="entry name" value="Kinase-like_dom_sf"/>
</dbReference>
<dbReference type="InterPro" id="IPR000719">
    <property type="entry name" value="Prot_kinase_dom"/>
</dbReference>
<dbReference type="InterPro" id="IPR017441">
    <property type="entry name" value="Protein_kinase_ATP_BS"/>
</dbReference>
<dbReference type="InterPro" id="IPR008271">
    <property type="entry name" value="Ser/Thr_kinase_AS"/>
</dbReference>
<dbReference type="PANTHER" id="PTHR11476">
    <property type="entry name" value="HISTIDYL-TRNA SYNTHETASE"/>
    <property type="match status" value="1"/>
</dbReference>
<dbReference type="PANTHER" id="PTHR11476:SF10">
    <property type="entry name" value="NON-SPECIFIC SERINE_THREONINE PROTEIN KINASE"/>
    <property type="match status" value="1"/>
</dbReference>
<dbReference type="Pfam" id="PF12745">
    <property type="entry name" value="HGTP_anticodon2"/>
    <property type="match status" value="1"/>
</dbReference>
<dbReference type="Pfam" id="PF00069">
    <property type="entry name" value="Pkinase"/>
    <property type="match status" value="2"/>
</dbReference>
<dbReference type="Pfam" id="PF13393">
    <property type="entry name" value="tRNA-synt_His"/>
    <property type="match status" value="1"/>
</dbReference>
<dbReference type="PIRSF" id="PIRSF000660">
    <property type="entry name" value="Ser/Thr_PK_GCN2"/>
    <property type="match status" value="1"/>
</dbReference>
<dbReference type="SMART" id="SM00220">
    <property type="entry name" value="S_TKc"/>
    <property type="match status" value="1"/>
</dbReference>
<dbReference type="SUPFAM" id="SSF52954">
    <property type="entry name" value="Class II aaRS ABD-related"/>
    <property type="match status" value="1"/>
</dbReference>
<dbReference type="SUPFAM" id="SSF55681">
    <property type="entry name" value="Class II aaRS and biotin synthetases"/>
    <property type="match status" value="1"/>
</dbReference>
<dbReference type="SUPFAM" id="SSF56112">
    <property type="entry name" value="Protein kinase-like (PK-like)"/>
    <property type="match status" value="1"/>
</dbReference>
<dbReference type="PROSITE" id="PS00107">
    <property type="entry name" value="PROTEIN_KINASE_ATP"/>
    <property type="match status" value="1"/>
</dbReference>
<dbReference type="PROSITE" id="PS50011">
    <property type="entry name" value="PROTEIN_KINASE_DOM"/>
    <property type="match status" value="1"/>
</dbReference>
<dbReference type="PROSITE" id="PS00108">
    <property type="entry name" value="PROTEIN_KINASE_ST"/>
    <property type="match status" value="1"/>
</dbReference>
<reference key="1">
    <citation type="journal article" date="2002" name="Nature">
        <title>Sequence and analysis of chromosome 2 of Dictyostelium discoideum.</title>
        <authorList>
            <person name="Gloeckner G."/>
            <person name="Eichinger L."/>
            <person name="Szafranski K."/>
            <person name="Pachebat J.A."/>
            <person name="Bankier A.T."/>
            <person name="Dear P.H."/>
            <person name="Lehmann R."/>
            <person name="Baumgart C."/>
            <person name="Parra G."/>
            <person name="Abril J.F."/>
            <person name="Guigo R."/>
            <person name="Kumpf K."/>
            <person name="Tunggal B."/>
            <person name="Cox E.C."/>
            <person name="Quail M.A."/>
            <person name="Platzer M."/>
            <person name="Rosenthal A."/>
            <person name="Noegel A.A."/>
        </authorList>
    </citation>
    <scope>NUCLEOTIDE SEQUENCE [LARGE SCALE GENOMIC DNA]</scope>
    <source>
        <strain>AX4</strain>
    </source>
</reference>
<reference key="2">
    <citation type="journal article" date="2005" name="Nature">
        <title>The genome of the social amoeba Dictyostelium discoideum.</title>
        <authorList>
            <person name="Eichinger L."/>
            <person name="Pachebat J.A."/>
            <person name="Gloeckner G."/>
            <person name="Rajandream M.A."/>
            <person name="Sucgang R."/>
            <person name="Berriman M."/>
            <person name="Song J."/>
            <person name="Olsen R."/>
            <person name="Szafranski K."/>
            <person name="Xu Q."/>
            <person name="Tunggal B."/>
            <person name="Kummerfeld S."/>
            <person name="Madera M."/>
            <person name="Konfortov B.A."/>
            <person name="Rivero F."/>
            <person name="Bankier A.T."/>
            <person name="Lehmann R."/>
            <person name="Hamlin N."/>
            <person name="Davies R."/>
            <person name="Gaudet P."/>
            <person name="Fey P."/>
            <person name="Pilcher K."/>
            <person name="Chen G."/>
            <person name="Saunders D."/>
            <person name="Sodergren E.J."/>
            <person name="Davis P."/>
            <person name="Kerhornou A."/>
            <person name="Nie X."/>
            <person name="Hall N."/>
            <person name="Anjard C."/>
            <person name="Hemphill L."/>
            <person name="Bason N."/>
            <person name="Farbrother P."/>
            <person name="Desany B."/>
            <person name="Just E."/>
            <person name="Morio T."/>
            <person name="Rost R."/>
            <person name="Churcher C.M."/>
            <person name="Cooper J."/>
            <person name="Haydock S."/>
            <person name="van Driessche N."/>
            <person name="Cronin A."/>
            <person name="Goodhead I."/>
            <person name="Muzny D.M."/>
            <person name="Mourier T."/>
            <person name="Pain A."/>
            <person name="Lu M."/>
            <person name="Harper D."/>
            <person name="Lindsay R."/>
            <person name="Hauser H."/>
            <person name="James K.D."/>
            <person name="Quiles M."/>
            <person name="Madan Babu M."/>
            <person name="Saito T."/>
            <person name="Buchrieser C."/>
            <person name="Wardroper A."/>
            <person name="Felder M."/>
            <person name="Thangavelu M."/>
            <person name="Johnson D."/>
            <person name="Knights A."/>
            <person name="Loulseged H."/>
            <person name="Mungall K.L."/>
            <person name="Oliver K."/>
            <person name="Price C."/>
            <person name="Quail M.A."/>
            <person name="Urushihara H."/>
            <person name="Hernandez J."/>
            <person name="Rabbinowitsch E."/>
            <person name="Steffen D."/>
            <person name="Sanders M."/>
            <person name="Ma J."/>
            <person name="Kohara Y."/>
            <person name="Sharp S."/>
            <person name="Simmonds M.N."/>
            <person name="Spiegler S."/>
            <person name="Tivey A."/>
            <person name="Sugano S."/>
            <person name="White B."/>
            <person name="Walker D."/>
            <person name="Woodward J.R."/>
            <person name="Winckler T."/>
            <person name="Tanaka Y."/>
            <person name="Shaulsky G."/>
            <person name="Schleicher M."/>
            <person name="Weinstock G.M."/>
            <person name="Rosenthal A."/>
            <person name="Cox E.C."/>
            <person name="Chisholm R.L."/>
            <person name="Gibbs R.A."/>
            <person name="Loomis W.F."/>
            <person name="Platzer M."/>
            <person name="Kay R.R."/>
            <person name="Williams J.G."/>
            <person name="Dear P.H."/>
            <person name="Noegel A.A."/>
            <person name="Barrell B.G."/>
            <person name="Kuspa A."/>
        </authorList>
    </citation>
    <scope>NUCLEOTIDE SEQUENCE [LARGE SCALE GENOMIC DNA]</scope>
    <source>
        <strain>AX4</strain>
    </source>
</reference>
<reference key="3">
    <citation type="journal article" date="2003" name="BMC Dev. Biol.">
        <title>IfkA, a presumptive eIF2 alpha kinase of Dictyostelium, is required for proper timing of aggregation and regulation of mound size.</title>
        <authorList>
            <person name="Fang R."/>
            <person name="Xiong Y."/>
            <person name="Singleton C.K."/>
        </authorList>
    </citation>
    <scope>DEVELOPMENTAL STAGE</scope>
</reference>
<reference key="4">
    <citation type="journal article" date="2006" name="Differentiation">
        <title>Disruption of the ifkA and ifkB genes results in altered cell adhesion, morphological defects and a propensity to form pre-stalk O cells during development of Dictyostelium.</title>
        <authorList>
            <person name="Rai M."/>
            <person name="Xiong Y."/>
            <person name="Singleton C.K."/>
        </authorList>
    </citation>
    <scope>DISRUPTION PHENOTYPE</scope>
</reference>
<comment type="catalytic activity">
    <reaction>
        <text>L-seryl-[protein] + ATP = O-phospho-L-seryl-[protein] + ADP + H(+)</text>
        <dbReference type="Rhea" id="RHEA:17989"/>
        <dbReference type="Rhea" id="RHEA-COMP:9863"/>
        <dbReference type="Rhea" id="RHEA-COMP:11604"/>
        <dbReference type="ChEBI" id="CHEBI:15378"/>
        <dbReference type="ChEBI" id="CHEBI:29999"/>
        <dbReference type="ChEBI" id="CHEBI:30616"/>
        <dbReference type="ChEBI" id="CHEBI:83421"/>
        <dbReference type="ChEBI" id="CHEBI:456216"/>
        <dbReference type="EC" id="2.7.11.1"/>
    </reaction>
</comment>
<comment type="catalytic activity">
    <reaction>
        <text>L-threonyl-[protein] + ATP = O-phospho-L-threonyl-[protein] + ADP + H(+)</text>
        <dbReference type="Rhea" id="RHEA:46608"/>
        <dbReference type="Rhea" id="RHEA-COMP:11060"/>
        <dbReference type="Rhea" id="RHEA-COMP:11605"/>
        <dbReference type="ChEBI" id="CHEBI:15378"/>
        <dbReference type="ChEBI" id="CHEBI:30013"/>
        <dbReference type="ChEBI" id="CHEBI:30616"/>
        <dbReference type="ChEBI" id="CHEBI:61977"/>
        <dbReference type="ChEBI" id="CHEBI:456216"/>
        <dbReference type="EC" id="2.7.11.1"/>
    </reaction>
</comment>
<comment type="developmental stage">
    <text evidence="4">Expression remains constant as development proceeds.</text>
</comment>
<comment type="disruption phenotype">
    <text evidence="5">Subtle morphological defects such as an aberrant stalk structure; due to the redundancy between ifkA and ifkB functions. Cells lacking ifkA and ifkB display severe morphological and patterning defects. Mutant cells aggregate in streams that give tightly clumped mounds. Fingers form from the mounds but remain attached to one another, especially at their bases. The fingers culminate to give fused and entangled structures lacking proper stalk but containing some spores. The morphological defects are consistent with an enhanced cell-cell and cell-substrate adhesiveness of the developing double null cells, which may result in inappropriate cell contacts and altered cell motility and sorting properties.</text>
</comment>
<comment type="similarity">
    <text evidence="1">Belongs to the protein kinase superfamily. Ser/Thr protein kinase family. GCN2 subfamily.</text>
</comment>
<protein>
    <recommendedName>
        <fullName>Probable serine/threonine-protein kinase ifkB</fullName>
        <ecNumber>2.7.11.1</ecNumber>
    </recommendedName>
    <alternativeName>
        <fullName>Initiation factor kinase B</fullName>
    </alternativeName>
</protein>
<gene>
    <name type="primary">ifkB</name>
    <name type="ORF">DDB_G0276829</name>
</gene>